<feature type="chain" id="PRO_1000195885" description="Large ribosomal subunit protein bL27">
    <location>
        <begin position="1"/>
        <end position="84"/>
    </location>
</feature>
<feature type="region of interest" description="Disordered" evidence="2">
    <location>
        <begin position="1"/>
        <end position="22"/>
    </location>
</feature>
<protein>
    <recommendedName>
        <fullName evidence="1">Large ribosomal subunit protein bL27</fullName>
    </recommendedName>
    <alternativeName>
        <fullName evidence="3">50S ribosomal protein L27</fullName>
    </alternativeName>
</protein>
<gene>
    <name evidence="1" type="primary">rpmA</name>
    <name type="ordered locus">Sbal223_3322</name>
</gene>
<sequence>MAHKKAGGSTRNGRDSESKRLGVKRFGGESVLAGNIIVRQRGTKFHAGVNVGIGRDHTLFALTDGKVKFEVKGANNRKFISIEA</sequence>
<accession>B8EC05</accession>
<reference key="1">
    <citation type="submission" date="2008-12" db="EMBL/GenBank/DDBJ databases">
        <title>Complete sequence of chromosome of Shewanella baltica OS223.</title>
        <authorList>
            <consortium name="US DOE Joint Genome Institute"/>
            <person name="Lucas S."/>
            <person name="Copeland A."/>
            <person name="Lapidus A."/>
            <person name="Glavina del Rio T."/>
            <person name="Dalin E."/>
            <person name="Tice H."/>
            <person name="Bruce D."/>
            <person name="Goodwin L."/>
            <person name="Pitluck S."/>
            <person name="Chertkov O."/>
            <person name="Meincke L."/>
            <person name="Brettin T."/>
            <person name="Detter J.C."/>
            <person name="Han C."/>
            <person name="Kuske C.R."/>
            <person name="Larimer F."/>
            <person name="Land M."/>
            <person name="Hauser L."/>
            <person name="Kyrpides N."/>
            <person name="Ovchinnikova G."/>
            <person name="Brettar I."/>
            <person name="Rodrigues J."/>
            <person name="Konstantinidis K."/>
            <person name="Tiedje J."/>
        </authorList>
    </citation>
    <scope>NUCLEOTIDE SEQUENCE [LARGE SCALE GENOMIC DNA]</scope>
    <source>
        <strain>OS223</strain>
    </source>
</reference>
<keyword id="KW-0687">Ribonucleoprotein</keyword>
<keyword id="KW-0689">Ribosomal protein</keyword>
<dbReference type="EMBL" id="CP001252">
    <property type="protein sequence ID" value="ACK47806.1"/>
    <property type="molecule type" value="Genomic_DNA"/>
</dbReference>
<dbReference type="RefSeq" id="WP_006080527.1">
    <property type="nucleotide sequence ID" value="NC_011663.1"/>
</dbReference>
<dbReference type="SMR" id="B8EC05"/>
<dbReference type="GeneID" id="11771357"/>
<dbReference type="KEGG" id="sbp:Sbal223_3322"/>
<dbReference type="HOGENOM" id="CLU_095424_4_1_6"/>
<dbReference type="Proteomes" id="UP000002507">
    <property type="component" value="Chromosome"/>
</dbReference>
<dbReference type="GO" id="GO:0022625">
    <property type="term" value="C:cytosolic large ribosomal subunit"/>
    <property type="evidence" value="ECO:0007669"/>
    <property type="project" value="TreeGrafter"/>
</dbReference>
<dbReference type="GO" id="GO:0003735">
    <property type="term" value="F:structural constituent of ribosome"/>
    <property type="evidence" value="ECO:0007669"/>
    <property type="project" value="InterPro"/>
</dbReference>
<dbReference type="GO" id="GO:0006412">
    <property type="term" value="P:translation"/>
    <property type="evidence" value="ECO:0007669"/>
    <property type="project" value="UniProtKB-UniRule"/>
</dbReference>
<dbReference type="FunFam" id="2.40.50.100:FF:000001">
    <property type="entry name" value="50S ribosomal protein L27"/>
    <property type="match status" value="1"/>
</dbReference>
<dbReference type="Gene3D" id="2.40.50.100">
    <property type="match status" value="1"/>
</dbReference>
<dbReference type="HAMAP" id="MF_00539">
    <property type="entry name" value="Ribosomal_bL27"/>
    <property type="match status" value="1"/>
</dbReference>
<dbReference type="InterPro" id="IPR001684">
    <property type="entry name" value="Ribosomal_bL27"/>
</dbReference>
<dbReference type="InterPro" id="IPR018261">
    <property type="entry name" value="Ribosomal_bL27_CS"/>
</dbReference>
<dbReference type="NCBIfam" id="TIGR00062">
    <property type="entry name" value="L27"/>
    <property type="match status" value="1"/>
</dbReference>
<dbReference type="PANTHER" id="PTHR15893:SF0">
    <property type="entry name" value="LARGE RIBOSOMAL SUBUNIT PROTEIN BL27M"/>
    <property type="match status" value="1"/>
</dbReference>
<dbReference type="PANTHER" id="PTHR15893">
    <property type="entry name" value="RIBOSOMAL PROTEIN L27"/>
    <property type="match status" value="1"/>
</dbReference>
<dbReference type="Pfam" id="PF01016">
    <property type="entry name" value="Ribosomal_L27"/>
    <property type="match status" value="1"/>
</dbReference>
<dbReference type="PRINTS" id="PR00063">
    <property type="entry name" value="RIBOSOMALL27"/>
</dbReference>
<dbReference type="SUPFAM" id="SSF110324">
    <property type="entry name" value="Ribosomal L27 protein-like"/>
    <property type="match status" value="1"/>
</dbReference>
<dbReference type="PROSITE" id="PS00831">
    <property type="entry name" value="RIBOSOMAL_L27"/>
    <property type="match status" value="1"/>
</dbReference>
<evidence type="ECO:0000255" key="1">
    <source>
        <dbReference type="HAMAP-Rule" id="MF_00539"/>
    </source>
</evidence>
<evidence type="ECO:0000256" key="2">
    <source>
        <dbReference type="SAM" id="MobiDB-lite"/>
    </source>
</evidence>
<evidence type="ECO:0000305" key="3"/>
<comment type="similarity">
    <text evidence="1">Belongs to the bacterial ribosomal protein bL27 family.</text>
</comment>
<proteinExistence type="inferred from homology"/>
<organism>
    <name type="scientific">Shewanella baltica (strain OS223)</name>
    <dbReference type="NCBI Taxonomy" id="407976"/>
    <lineage>
        <taxon>Bacteria</taxon>
        <taxon>Pseudomonadati</taxon>
        <taxon>Pseudomonadota</taxon>
        <taxon>Gammaproteobacteria</taxon>
        <taxon>Alteromonadales</taxon>
        <taxon>Shewanellaceae</taxon>
        <taxon>Shewanella</taxon>
    </lineage>
</organism>
<name>RL27_SHEB2</name>